<gene>
    <name evidence="1" type="primary">pyrB</name>
    <name type="ordered locus">MAV_3393</name>
</gene>
<keyword id="KW-0665">Pyrimidine biosynthesis</keyword>
<keyword id="KW-0808">Transferase</keyword>
<accession>A0QI37</accession>
<organism>
    <name type="scientific">Mycobacterium avium (strain 104)</name>
    <dbReference type="NCBI Taxonomy" id="243243"/>
    <lineage>
        <taxon>Bacteria</taxon>
        <taxon>Bacillati</taxon>
        <taxon>Actinomycetota</taxon>
        <taxon>Actinomycetes</taxon>
        <taxon>Mycobacteriales</taxon>
        <taxon>Mycobacteriaceae</taxon>
        <taxon>Mycobacterium</taxon>
        <taxon>Mycobacterium avium complex (MAC)</taxon>
    </lineage>
</organism>
<reference key="1">
    <citation type="submission" date="2006-10" db="EMBL/GenBank/DDBJ databases">
        <authorList>
            <person name="Fleischmann R.D."/>
            <person name="Dodson R.J."/>
            <person name="Haft D.H."/>
            <person name="Merkel J.S."/>
            <person name="Nelson W.C."/>
            <person name="Fraser C.M."/>
        </authorList>
    </citation>
    <scope>NUCLEOTIDE SEQUENCE [LARGE SCALE GENOMIC DNA]</scope>
    <source>
        <strain>104</strain>
    </source>
</reference>
<dbReference type="EC" id="2.1.3.2" evidence="1"/>
<dbReference type="EMBL" id="CP000479">
    <property type="protein sequence ID" value="ABK66201.1"/>
    <property type="molecule type" value="Genomic_DNA"/>
</dbReference>
<dbReference type="RefSeq" id="WP_003872564.1">
    <property type="nucleotide sequence ID" value="NC_008595.1"/>
</dbReference>
<dbReference type="SMR" id="A0QI37"/>
<dbReference type="KEGG" id="mav:MAV_3393"/>
<dbReference type="HOGENOM" id="CLU_043846_2_0_11"/>
<dbReference type="UniPathway" id="UPA00070">
    <property type="reaction ID" value="UER00116"/>
</dbReference>
<dbReference type="Proteomes" id="UP000001574">
    <property type="component" value="Chromosome"/>
</dbReference>
<dbReference type="GO" id="GO:0005829">
    <property type="term" value="C:cytosol"/>
    <property type="evidence" value="ECO:0007669"/>
    <property type="project" value="TreeGrafter"/>
</dbReference>
<dbReference type="GO" id="GO:0016597">
    <property type="term" value="F:amino acid binding"/>
    <property type="evidence" value="ECO:0007669"/>
    <property type="project" value="InterPro"/>
</dbReference>
<dbReference type="GO" id="GO:0004070">
    <property type="term" value="F:aspartate carbamoyltransferase activity"/>
    <property type="evidence" value="ECO:0007669"/>
    <property type="project" value="UniProtKB-UniRule"/>
</dbReference>
<dbReference type="GO" id="GO:0006207">
    <property type="term" value="P:'de novo' pyrimidine nucleobase biosynthetic process"/>
    <property type="evidence" value="ECO:0007669"/>
    <property type="project" value="InterPro"/>
</dbReference>
<dbReference type="GO" id="GO:0044205">
    <property type="term" value="P:'de novo' UMP biosynthetic process"/>
    <property type="evidence" value="ECO:0007669"/>
    <property type="project" value="UniProtKB-UniRule"/>
</dbReference>
<dbReference type="GO" id="GO:0006520">
    <property type="term" value="P:amino acid metabolic process"/>
    <property type="evidence" value="ECO:0007669"/>
    <property type="project" value="InterPro"/>
</dbReference>
<dbReference type="FunFam" id="3.40.50.1370:FF:000007">
    <property type="entry name" value="Aspartate carbamoyltransferase"/>
    <property type="match status" value="1"/>
</dbReference>
<dbReference type="FunFam" id="3.40.50.1370:FF:000012">
    <property type="entry name" value="Aspartate carbamoyltransferase"/>
    <property type="match status" value="1"/>
</dbReference>
<dbReference type="Gene3D" id="3.40.50.1370">
    <property type="entry name" value="Aspartate/ornithine carbamoyltransferase"/>
    <property type="match status" value="2"/>
</dbReference>
<dbReference type="HAMAP" id="MF_00001">
    <property type="entry name" value="Asp_carb_tr"/>
    <property type="match status" value="1"/>
</dbReference>
<dbReference type="InterPro" id="IPR006132">
    <property type="entry name" value="Asp/Orn_carbamoyltranf_P-bd"/>
</dbReference>
<dbReference type="InterPro" id="IPR006130">
    <property type="entry name" value="Asp/Orn_carbamoylTrfase"/>
</dbReference>
<dbReference type="InterPro" id="IPR036901">
    <property type="entry name" value="Asp/Orn_carbamoylTrfase_sf"/>
</dbReference>
<dbReference type="InterPro" id="IPR002082">
    <property type="entry name" value="Asp_carbamoyltransf"/>
</dbReference>
<dbReference type="InterPro" id="IPR006131">
    <property type="entry name" value="Asp_carbamoyltransf_Asp/Orn-bd"/>
</dbReference>
<dbReference type="NCBIfam" id="TIGR00670">
    <property type="entry name" value="asp_carb_tr"/>
    <property type="match status" value="1"/>
</dbReference>
<dbReference type="NCBIfam" id="NF002032">
    <property type="entry name" value="PRK00856.1"/>
    <property type="match status" value="1"/>
</dbReference>
<dbReference type="PANTHER" id="PTHR45753:SF6">
    <property type="entry name" value="ASPARTATE CARBAMOYLTRANSFERASE"/>
    <property type="match status" value="1"/>
</dbReference>
<dbReference type="PANTHER" id="PTHR45753">
    <property type="entry name" value="ORNITHINE CARBAMOYLTRANSFERASE, MITOCHONDRIAL"/>
    <property type="match status" value="1"/>
</dbReference>
<dbReference type="Pfam" id="PF00185">
    <property type="entry name" value="OTCace"/>
    <property type="match status" value="1"/>
</dbReference>
<dbReference type="Pfam" id="PF02729">
    <property type="entry name" value="OTCace_N"/>
    <property type="match status" value="1"/>
</dbReference>
<dbReference type="PRINTS" id="PR00100">
    <property type="entry name" value="AOTCASE"/>
</dbReference>
<dbReference type="PRINTS" id="PR00101">
    <property type="entry name" value="ATCASE"/>
</dbReference>
<dbReference type="SUPFAM" id="SSF53671">
    <property type="entry name" value="Aspartate/ornithine carbamoyltransferase"/>
    <property type="match status" value="1"/>
</dbReference>
<dbReference type="PROSITE" id="PS00097">
    <property type="entry name" value="CARBAMOYLTRANSFERASE"/>
    <property type="match status" value="1"/>
</dbReference>
<comment type="function">
    <text evidence="1">Catalyzes the condensation of carbamoyl phosphate and aspartate to form carbamoyl aspartate and inorganic phosphate, the committed step in the de novo pyrimidine nucleotide biosynthesis pathway.</text>
</comment>
<comment type="catalytic activity">
    <reaction evidence="1">
        <text>carbamoyl phosphate + L-aspartate = N-carbamoyl-L-aspartate + phosphate + H(+)</text>
        <dbReference type="Rhea" id="RHEA:20013"/>
        <dbReference type="ChEBI" id="CHEBI:15378"/>
        <dbReference type="ChEBI" id="CHEBI:29991"/>
        <dbReference type="ChEBI" id="CHEBI:32814"/>
        <dbReference type="ChEBI" id="CHEBI:43474"/>
        <dbReference type="ChEBI" id="CHEBI:58228"/>
        <dbReference type="EC" id="2.1.3.2"/>
    </reaction>
</comment>
<comment type="pathway">
    <text evidence="1">Pyrimidine metabolism; UMP biosynthesis via de novo pathway; (S)-dihydroorotate from bicarbonate: step 2/3.</text>
</comment>
<comment type="subunit">
    <text evidence="1">Heterododecamer (2C3:3R2) of six catalytic PyrB chains organized as two trimers (C3), and six regulatory PyrI chains organized as three dimers (R2).</text>
</comment>
<comment type="similarity">
    <text evidence="1">Belongs to the aspartate/ornithine carbamoyltransferase superfamily. ATCase family.</text>
</comment>
<name>PYRB_MYCA1</name>
<feature type="chain" id="PRO_0000301589" description="Aspartate carbamoyltransferase catalytic subunit">
    <location>
        <begin position="1"/>
        <end position="318"/>
    </location>
</feature>
<feature type="binding site" evidence="1">
    <location>
        <position position="56"/>
    </location>
    <ligand>
        <name>carbamoyl phosphate</name>
        <dbReference type="ChEBI" id="CHEBI:58228"/>
    </ligand>
</feature>
<feature type="binding site" evidence="1">
    <location>
        <position position="57"/>
    </location>
    <ligand>
        <name>carbamoyl phosphate</name>
        <dbReference type="ChEBI" id="CHEBI:58228"/>
    </ligand>
</feature>
<feature type="binding site" evidence="1">
    <location>
        <position position="84"/>
    </location>
    <ligand>
        <name>L-aspartate</name>
        <dbReference type="ChEBI" id="CHEBI:29991"/>
    </ligand>
</feature>
<feature type="binding site" evidence="1">
    <location>
        <position position="106"/>
    </location>
    <ligand>
        <name>carbamoyl phosphate</name>
        <dbReference type="ChEBI" id="CHEBI:58228"/>
    </ligand>
</feature>
<feature type="binding site" evidence="1">
    <location>
        <position position="143"/>
    </location>
    <ligand>
        <name>carbamoyl phosphate</name>
        <dbReference type="ChEBI" id="CHEBI:58228"/>
    </ligand>
</feature>
<feature type="binding site" evidence="1">
    <location>
        <position position="146"/>
    </location>
    <ligand>
        <name>carbamoyl phosphate</name>
        <dbReference type="ChEBI" id="CHEBI:58228"/>
    </ligand>
</feature>
<feature type="binding site" evidence="1">
    <location>
        <position position="176"/>
    </location>
    <ligand>
        <name>L-aspartate</name>
        <dbReference type="ChEBI" id="CHEBI:29991"/>
    </ligand>
</feature>
<feature type="binding site" evidence="1">
    <location>
        <position position="230"/>
    </location>
    <ligand>
        <name>L-aspartate</name>
        <dbReference type="ChEBI" id="CHEBI:29991"/>
    </ligand>
</feature>
<feature type="binding site" evidence="1">
    <location>
        <position position="271"/>
    </location>
    <ligand>
        <name>carbamoyl phosphate</name>
        <dbReference type="ChEBI" id="CHEBI:58228"/>
    </ligand>
</feature>
<feature type="binding site" evidence="1">
    <location>
        <position position="272"/>
    </location>
    <ligand>
        <name>carbamoyl phosphate</name>
        <dbReference type="ChEBI" id="CHEBI:58228"/>
    </ligand>
</feature>
<proteinExistence type="inferred from homology"/>
<evidence type="ECO:0000255" key="1">
    <source>
        <dbReference type="HAMAP-Rule" id="MF_00001"/>
    </source>
</evidence>
<protein>
    <recommendedName>
        <fullName evidence="1">Aspartate carbamoyltransferase catalytic subunit</fullName>
        <ecNumber evidence="1">2.1.3.2</ecNumber>
    </recommendedName>
    <alternativeName>
        <fullName evidence="1">Aspartate transcarbamylase</fullName>
        <shortName evidence="1">ATCase</shortName>
    </alternativeName>
</protein>
<sequence length="318" mass="33593">MTRHLLAAGDLSRDDATAILDDADRFAQALVGREIKKLPTLRGRTVVTMFYENSTRTRVSFEVAGKWMSADVINVSAAGSSVGKGESLRDTALTLRAAGADALIIRHPASGAAHLLAEWTCGNGDSSDAGPSVINAGDGTHEHPTQALLDALTIRQRLGGIEGRRVVIVGDVLHSRVARSNVMLLSTLGAEVVLVAPPTLLPVGVEGWPVTVSNDFDAELPAADAVLMLRVQAERMNGGFFPSVREYSSLYGLSDRRQAMLPGHAVVLHPGPMLRGMEIASSVADSSQSAVLQQVSNGVHVRMAVLFHVLVGAEEIAA</sequence>